<name>B3A3_PLEMO</name>
<sequence>MANGVIPPPGGASPLPQVRVPLEEPPLSPDVEEEDDDLGKTLAVSRFGDLISKPPAWDPEKPSRSYSERDFEFHRHTSHHTHHPLSARLPPPHKLRRLPPTSGRHTRRKRKKEKTSVPPSEGTPPIQEEGGAGVDEEEEEEEEEEGESEAEPVEPPPSGSPPKAKFSIGSDEDDSPGLPGRAAVTKPLPSVGPRTDKSPQHSGSFPSPRARASRLAGEKSRPWSPSASYDLRERLCPGSALGNPGGPEQQVPTDEAEAQMLGSADLDDMKSHRLEDNPGVRRHLVKKPSRTQGGRGSPSGLAPILRRKKKKKKLDRRPHEVFVELNELMLDRSQEPHWRETARWIKFEEDVEEETERWGKPHVASLSFRSLLELRRTIAHGAALLDLEQTTLPGIAHLVVETMIVSDQIRPEDRASVLRTLLLKHSHPNDDKDSGFFPRNPSSSSMNSVLGNHHPTPSHGPDGAVPTMADDLGEPAPLWPHDPDAKEKPLHMPGGDSHRGKSLKLLEKIPEDAEATVVLVGCVPFLEQPAAAFVRLNEAVLLESVLEVPVPVRFLFVMLGPSHTSTDYHELGRSIATLMSDKLFHEAAYQADDRQDLLSAISEFLDGSIVIPPSEVEGRDLLRSVAAFQRELLRKRREREQTKVEMTTRGGYTAPGKELSLELGGSEATPEDDPLLRTGSIFGGLVRDVRRRYPYYPSDLRDALHSQCVAAVLFIYFAALSPAITFGGLLGEKTEGLMGVSELIVSTAVLGVLFSLLGAQPLLVVGFSGPLLVFEEAFFKFCRAQDLEYLTGRVWVGLWLVVFVLALVAAEGSFLVRYISPFTQEIFAFLISLIFIYETFYKLYKVFTEHPLLPFYPPEGALEGSLEAGLEPNGSALPPTEGPRGPRNQPNTALLSLILMLGTFFIAFFLRKFRNSRFLGGKARRIIGDFGIPISILVMVLVDYSITDTYTQKLTVPTGLSVTSPDKRSWFIPPLGSARPFPPWMMVAAAVPALLVLILIFMETQITALIVSQKARRLLKGSGFHLDLLLIGSLGGLCGLFGLPWLTAATVRSVTHVNALTVMRTAIAPGDKPQIQEVREQRVTGVLIASLVGLSIVMGAVLRRIPLAVLFGIFLYMGVTSLSGIQLSQRLLLILMPAKHHPEQPYVTKVKTWRMHLFTCIQLGCIALLWVVKSTAASLAFPFLLLLTVPLRHCLLPRLFQDRELQALDSEDAEPNFDEDGQDEYNELHMPV</sequence>
<comment type="function">
    <text evidence="4">Sodium-independent anion exchanger which mediates the electroneutral exchange of chloride for bicarbonate ions across the cell membrane. May be involved in the regulation of intracellular pH, and the modulation of cardiac action potential.</text>
</comment>
<comment type="catalytic activity">
    <reaction evidence="2">
        <text>hydrogencarbonate(in) + chloride(out) = hydrogencarbonate(out) + chloride(in)</text>
        <dbReference type="Rhea" id="RHEA:72363"/>
        <dbReference type="ChEBI" id="CHEBI:17544"/>
        <dbReference type="ChEBI" id="CHEBI:17996"/>
    </reaction>
</comment>
<comment type="subcellular location">
    <subcellularLocation>
        <location evidence="2">Cell membrane</location>
        <topology evidence="5">Multi-pass membrane protein</topology>
    </subcellularLocation>
</comment>
<comment type="similarity">
    <text evidence="7">Belongs to the anion exchanger (TC 2.A.31) family.</text>
</comment>
<evidence type="ECO:0000250" key="1"/>
<evidence type="ECO:0000250" key="2">
    <source>
        <dbReference type="UniProtKB" id="P16283"/>
    </source>
</evidence>
<evidence type="ECO:0000250" key="3">
    <source>
        <dbReference type="UniProtKB" id="P23348"/>
    </source>
</evidence>
<evidence type="ECO:0000250" key="4">
    <source>
        <dbReference type="UniProtKB" id="P48751"/>
    </source>
</evidence>
<evidence type="ECO:0000255" key="5"/>
<evidence type="ECO:0000256" key="6">
    <source>
        <dbReference type="SAM" id="MobiDB-lite"/>
    </source>
</evidence>
<evidence type="ECO:0000305" key="7"/>
<gene>
    <name type="primary">SLC4A3</name>
</gene>
<protein>
    <recommendedName>
        <fullName>Anion exchange protein 3</fullName>
        <shortName>AE 3</shortName>
        <shortName>Anion exchanger 3</shortName>
    </recommendedName>
    <alternativeName>
        <fullName>Solute carrier family 4 member 3</fullName>
    </alternativeName>
</protein>
<accession>B1MTL0</accession>
<feature type="chain" id="PRO_0000385514" description="Anion exchange protein 3">
    <location>
        <begin position="1"/>
        <end position="1232"/>
    </location>
</feature>
<feature type="topological domain" description="Cytoplasmic">
    <location>
        <begin position="1"/>
        <end position="708"/>
    </location>
</feature>
<feature type="transmembrane region" description="Helical" evidence="5">
    <location>
        <begin position="709"/>
        <end position="731"/>
    </location>
</feature>
<feature type="transmembrane region" description="Helical" evidence="5">
    <location>
        <begin position="737"/>
        <end position="774"/>
    </location>
</feature>
<feature type="transmembrane region" description="Helical" evidence="5">
    <location>
        <begin position="794"/>
        <end position="816"/>
    </location>
</feature>
<feature type="transmembrane region" description="Helical" evidence="5">
    <location>
        <begin position="826"/>
        <end position="847"/>
    </location>
</feature>
<feature type="transmembrane region" description="Helical" evidence="5">
    <location>
        <begin position="893"/>
        <end position="910"/>
    </location>
</feature>
<feature type="topological domain" description="Cytoplasmic" evidence="5">
    <location>
        <begin position="911"/>
        <end position="925"/>
    </location>
</feature>
<feature type="transmembrane region" description="Helical" evidence="5">
    <location>
        <begin position="926"/>
        <end position="946"/>
    </location>
</feature>
<feature type="transmembrane region" description="Helical" evidence="5">
    <location>
        <begin position="980"/>
        <end position="1002"/>
    </location>
</feature>
<feature type="transmembrane region" description="Helical" evidence="5">
    <location>
        <begin position="1028"/>
        <end position="1049"/>
    </location>
</feature>
<feature type="transmembrane region" description="Helical" evidence="5">
    <location>
        <begin position="1083"/>
        <end position="1128"/>
    </location>
</feature>
<feature type="transmembrane region" description="Helical" evidence="5">
    <location>
        <begin position="1155"/>
        <end position="1191"/>
    </location>
</feature>
<feature type="region of interest" description="Disordered" evidence="6">
    <location>
        <begin position="1"/>
        <end position="316"/>
    </location>
</feature>
<feature type="region of interest" description="Disordered" evidence="6">
    <location>
        <begin position="429"/>
        <end position="499"/>
    </location>
</feature>
<feature type="region of interest" description="Membrane (anion exchange)">
    <location>
        <begin position="709"/>
        <end position="1232"/>
    </location>
</feature>
<feature type="compositionally biased region" description="Pro residues" evidence="6">
    <location>
        <begin position="1"/>
        <end position="11"/>
    </location>
</feature>
<feature type="compositionally biased region" description="Basic and acidic residues" evidence="6">
    <location>
        <begin position="58"/>
        <end position="75"/>
    </location>
</feature>
<feature type="compositionally biased region" description="Basic residues" evidence="6">
    <location>
        <begin position="76"/>
        <end position="97"/>
    </location>
</feature>
<feature type="compositionally biased region" description="Basic residues" evidence="6">
    <location>
        <begin position="104"/>
        <end position="113"/>
    </location>
</feature>
<feature type="compositionally biased region" description="Acidic residues" evidence="6">
    <location>
        <begin position="134"/>
        <end position="152"/>
    </location>
</feature>
<feature type="compositionally biased region" description="Basic and acidic residues" evidence="6">
    <location>
        <begin position="267"/>
        <end position="279"/>
    </location>
</feature>
<feature type="compositionally biased region" description="Basic residues" evidence="6">
    <location>
        <begin position="280"/>
        <end position="289"/>
    </location>
</feature>
<feature type="compositionally biased region" description="Basic residues" evidence="6">
    <location>
        <begin position="305"/>
        <end position="316"/>
    </location>
</feature>
<feature type="compositionally biased region" description="Polar residues" evidence="6">
    <location>
        <begin position="440"/>
        <end position="450"/>
    </location>
</feature>
<feature type="compositionally biased region" description="Basic and acidic residues" evidence="6">
    <location>
        <begin position="481"/>
        <end position="499"/>
    </location>
</feature>
<feature type="modified residue" description="Phosphoserine" evidence="2">
    <location>
        <position position="167"/>
    </location>
</feature>
<feature type="modified residue" description="Phosphoserine" evidence="2">
    <location>
        <position position="170"/>
    </location>
</feature>
<feature type="modified residue" description="Phosphoserine" evidence="3">
    <location>
        <position position="175"/>
    </location>
</feature>
<feature type="modified residue" description="Phosphoserine" evidence="2">
    <location>
        <position position="198"/>
    </location>
</feature>
<feature type="modified residue" description="Omega-N-methylarginine" evidence="2">
    <location>
        <position position="295"/>
    </location>
</feature>
<feature type="lipid moiety-binding region" description="S-palmitoyl cysteine" evidence="1">
    <location>
        <position position="1165"/>
    </location>
</feature>
<organism>
    <name type="scientific">Plecturocebus moloch</name>
    <name type="common">Dusky titi monkey</name>
    <name type="synonym">Callicebus moloch</name>
    <dbReference type="NCBI Taxonomy" id="9523"/>
    <lineage>
        <taxon>Eukaryota</taxon>
        <taxon>Metazoa</taxon>
        <taxon>Chordata</taxon>
        <taxon>Craniata</taxon>
        <taxon>Vertebrata</taxon>
        <taxon>Euteleostomi</taxon>
        <taxon>Mammalia</taxon>
        <taxon>Eutheria</taxon>
        <taxon>Euarchontoglires</taxon>
        <taxon>Primates</taxon>
        <taxon>Haplorrhini</taxon>
        <taxon>Platyrrhini</taxon>
        <taxon>Pitheciidae</taxon>
        <taxon>Callicebinae</taxon>
        <taxon>Plecturocebus</taxon>
    </lineage>
</organism>
<proteinExistence type="inferred from homology"/>
<dbReference type="EMBL" id="DP000640">
    <property type="protein sequence ID" value="ACA64872.1"/>
    <property type="molecule type" value="Genomic_DNA"/>
</dbReference>
<dbReference type="SMR" id="B1MTL0"/>
<dbReference type="GO" id="GO:0005886">
    <property type="term" value="C:plasma membrane"/>
    <property type="evidence" value="ECO:0000250"/>
    <property type="project" value="UniProtKB"/>
</dbReference>
<dbReference type="GO" id="GO:0140900">
    <property type="term" value="F:chloride:bicarbonate antiporter activity"/>
    <property type="evidence" value="ECO:0000250"/>
    <property type="project" value="UniProtKB"/>
</dbReference>
<dbReference type="GO" id="GO:0045851">
    <property type="term" value="P:pH reduction"/>
    <property type="evidence" value="ECO:0000250"/>
    <property type="project" value="UniProtKB"/>
</dbReference>
<dbReference type="GO" id="GO:0098901">
    <property type="term" value="P:regulation of cardiac muscle cell action potential"/>
    <property type="evidence" value="ECO:0000250"/>
    <property type="project" value="UniProtKB"/>
</dbReference>
<dbReference type="GO" id="GO:0051453">
    <property type="term" value="P:regulation of intracellular pH"/>
    <property type="evidence" value="ECO:0007669"/>
    <property type="project" value="TreeGrafter"/>
</dbReference>
<dbReference type="FunFam" id="1.10.287.570:FF:000001">
    <property type="entry name" value="Anion exchange protein"/>
    <property type="match status" value="1"/>
</dbReference>
<dbReference type="FunFam" id="3.40.930.10:FF:000004">
    <property type="entry name" value="Anion exchange protein"/>
    <property type="match status" value="1"/>
</dbReference>
<dbReference type="Gene3D" id="1.10.287.570">
    <property type="entry name" value="Helical hairpin bin"/>
    <property type="match status" value="1"/>
</dbReference>
<dbReference type="Gene3D" id="3.40.930.10">
    <property type="entry name" value="Mannitol-specific EII, Chain A"/>
    <property type="match status" value="1"/>
</dbReference>
<dbReference type="InterPro" id="IPR001717">
    <property type="entry name" value="Anion_exchange"/>
</dbReference>
<dbReference type="InterPro" id="IPR002979">
    <property type="entry name" value="Anion_exchange_3"/>
</dbReference>
<dbReference type="InterPro" id="IPR018241">
    <property type="entry name" value="Anion_exchange_CS"/>
</dbReference>
<dbReference type="InterPro" id="IPR013769">
    <property type="entry name" value="Band3_cytoplasmic_dom"/>
</dbReference>
<dbReference type="InterPro" id="IPR011531">
    <property type="entry name" value="HCO3_transpt-like_TM_dom"/>
</dbReference>
<dbReference type="InterPro" id="IPR003020">
    <property type="entry name" value="HCO3_transpt_euk"/>
</dbReference>
<dbReference type="InterPro" id="IPR016152">
    <property type="entry name" value="PTrfase/Anion_transptr"/>
</dbReference>
<dbReference type="NCBIfam" id="TIGR00834">
    <property type="entry name" value="ae"/>
    <property type="match status" value="1"/>
</dbReference>
<dbReference type="PANTHER" id="PTHR11453">
    <property type="entry name" value="ANION EXCHANGE PROTEIN"/>
    <property type="match status" value="1"/>
</dbReference>
<dbReference type="PANTHER" id="PTHR11453:SF15">
    <property type="entry name" value="ANION EXCHANGE PROTEIN 3"/>
    <property type="match status" value="1"/>
</dbReference>
<dbReference type="Pfam" id="PF07565">
    <property type="entry name" value="Band_3_cyto"/>
    <property type="match status" value="1"/>
</dbReference>
<dbReference type="Pfam" id="PF00955">
    <property type="entry name" value="HCO3_cotransp"/>
    <property type="match status" value="1"/>
</dbReference>
<dbReference type="PRINTS" id="PR00165">
    <property type="entry name" value="ANIONEXCHNGR"/>
</dbReference>
<dbReference type="PRINTS" id="PR01189">
    <property type="entry name" value="ANIONEXHNGR3"/>
</dbReference>
<dbReference type="PRINTS" id="PR01231">
    <property type="entry name" value="HCO3TRNSPORT"/>
</dbReference>
<dbReference type="SUPFAM" id="SSF55804">
    <property type="entry name" value="Phoshotransferase/anion transport protein"/>
    <property type="match status" value="1"/>
</dbReference>
<dbReference type="PROSITE" id="PS00219">
    <property type="entry name" value="ANION_EXCHANGER_1"/>
    <property type="match status" value="1"/>
</dbReference>
<dbReference type="PROSITE" id="PS00220">
    <property type="entry name" value="ANION_EXCHANGER_2"/>
    <property type="match status" value="1"/>
</dbReference>
<keyword id="KW-0039">Anion exchange</keyword>
<keyword id="KW-0050">Antiport</keyword>
<keyword id="KW-1003">Cell membrane</keyword>
<keyword id="KW-0406">Ion transport</keyword>
<keyword id="KW-0449">Lipoprotein</keyword>
<keyword id="KW-0472">Membrane</keyword>
<keyword id="KW-0488">Methylation</keyword>
<keyword id="KW-0564">Palmitate</keyword>
<keyword id="KW-0597">Phosphoprotein</keyword>
<keyword id="KW-0812">Transmembrane</keyword>
<keyword id="KW-1133">Transmembrane helix</keyword>
<keyword id="KW-0813">Transport</keyword>
<reference key="1">
    <citation type="submission" date="2008-03" db="EMBL/GenBank/DDBJ databases">
        <title>NISC comparative sequencing initiative.</title>
        <authorList>
            <person name="Antonellis A."/>
            <person name="Benjamin B."/>
            <person name="Blakesley R.W."/>
            <person name="Bouffard G.G."/>
            <person name="Brinkley C."/>
            <person name="Brooks S."/>
            <person name="Chu G."/>
            <person name="Chub I."/>
            <person name="Coleman H."/>
            <person name="Fuksenko T."/>
            <person name="Gestole M."/>
            <person name="Gregory M."/>
            <person name="Guan X."/>
            <person name="Gupta J."/>
            <person name="Gurson N."/>
            <person name="Han E."/>
            <person name="Han J."/>
            <person name="Hansen N."/>
            <person name="Hargrove A."/>
            <person name="Hines-Harris K."/>
            <person name="Ho S.-L."/>
            <person name="Hu P."/>
            <person name="Hunter G."/>
            <person name="Hurle B."/>
            <person name="Idol J.R."/>
            <person name="Johnson T."/>
            <person name="Knight E."/>
            <person name="Kwong P."/>
            <person name="Lee-Lin S.-Q."/>
            <person name="Legaspi R."/>
            <person name="Madden M."/>
            <person name="Maduro Q.L."/>
            <person name="Maduro V.B."/>
            <person name="Margulies E.H."/>
            <person name="Masiello C."/>
            <person name="Maskeri B."/>
            <person name="McDowell J."/>
            <person name="Merkulov G."/>
            <person name="Montemayor C."/>
            <person name="Mullikin J.C."/>
            <person name="Park M."/>
            <person name="Prasad A."/>
            <person name="Ramsahoye C."/>
            <person name="Reddix-Dugue N."/>
            <person name="Riebow N."/>
            <person name="Schandler K."/>
            <person name="Schueler M.G."/>
            <person name="Sison C."/>
            <person name="Smith L."/>
            <person name="Stantripop S."/>
            <person name="Thomas J.W."/>
            <person name="Thomas P.J."/>
            <person name="Tsipouri V."/>
            <person name="Young A."/>
            <person name="Green E.D."/>
        </authorList>
    </citation>
    <scope>NUCLEOTIDE SEQUENCE [LARGE SCALE GENOMIC DNA]</scope>
</reference>